<proteinExistence type="evidence at protein level"/>
<sequence>MAVRKKDGGPNVKYYEAADTVTQFDNVRLWLGKNYKKYIQAEPPTNKSLSSLVVQLLQFQEEVFGKHVSNAPLTKLPIKCFLDFKAGGSLCHILAAAYKFKSDQGWRRYDFQNPSRMDRNVEMFMTIEKSLVQNNCLSRPNIFLCPEIEPKLLGKLKDIVKRHQGTISEDKSNASHVVYPVPGNLEEEEWVRPVMKRDKQVLLHWGYYPDSYDTWIPASEIEASVEDAPTPEKPRKVHAKWILDTDTFNEWMNEEDYEVSDDKSPVSRRKKISAKTLTDEVNSPDSDRRDKKGGNYKKRKRSPSPSPTPEAKKKNAKKGPSTPYTKSKRGHREEEQEDLTKDMDEPSPVPNVEEVTLPKTVNTKKDSESAPVKGGTMTDLDEQDDESMETTGKDEDENSTGNKGEQTKNPDLHEDNVTEQTHHIIIPSYAAWFDYNSVHAIERRALPEFFNGKNKSKTPEIYLAYRNFMIDTYRLNPQEYLTSTACRRNLAGDVCAIMRVHAFLEQWGLINYQVDAESRPTPMGPPPTSHFHVLADTPSGLVPLQPKPPQQSSASQQMLNFPEKGKEKPADMQNFGLRTDMYTKKNVPSKSKAAASATREWTEQETLLLLEALEMYKDDWNKVSEHVGSRTQDECILHFLRLPIEDPYLEDSEASLGPLAYQPIPFSQSGNPVMSTVAFLASVVDPRVASAAAKSALEEFSKMKEEVPTALVEAHVRKVEEAAKVTGKADPAFGLESSGIAGTASDEPERIEESGTEEARPEGQAADEKKEPKEPREGGGAVEEEAKEEISEVPKKDEEKGKEGDSEKESEKSDGDPIVDPEKDKEPTEGQEEVLKEVAEPEGERKTKVERDIGEGNLSTAAAAALAAAAVKAKHLAAVEERKIKSLVALLVETQMKKLEIKLRHFEELETIMDREREALEYQRQQLLADRQAFHMEQLKYAEMRARQQHFQQMHQQQQQQPPTLPPGSQPIPPTGAAGPPTVHGLAVPPAAVASAPPGSGAPPGSLGPSEQIGQAGTTAGPQQPQQAGAPQPGAVPPGVPPPGPHGPSPFPNQPTPPSMMPGAVPGSGHPGVAGNAPLGLPFGMPPPPPAAPSVIPFGSLADSISINLPPPPNLHGHHHHLPFAPGTIPPPNLPVSMANPLHPNLPATTTMPSSLPLGPGLGSAAAQSPAIVAAVQGNLLPSASPLPDPGTPLPPDPTAPSPGTVTPVPPPQ</sequence>
<accession>Q6PDG5</accession>
<accession>Q6P6P3</accession>
<gene>
    <name type="primary">Smarcc2</name>
    <name type="synonym">Baf170</name>
</gene>
<protein>
    <recommendedName>
        <fullName>SWI/SNF complex subunit SMARCC2</fullName>
    </recommendedName>
    <alternativeName>
        <fullName>BRG1-associated factor 170</fullName>
        <shortName>BAF170</shortName>
    </alternativeName>
    <alternativeName>
        <fullName>SWI/SNF complex 170 kDa subunit</fullName>
    </alternativeName>
    <alternativeName>
        <fullName>SWI/SNF-related matrix-associated actin-dependent regulator of chromatin subfamily C member 2</fullName>
    </alternativeName>
</protein>
<comment type="function">
    <text evidence="7 9 11 13 14">Involved in transcriptional activation and repression of select genes by chromatin remodeling (alteration of DNA-nucleosome topology). Component of SWI/SNF chromatin remodeling complexes that carry out key enzymatic activities, changing chromatin structure by altering DNA-histone contacts within a nucleosome in an ATP-dependent manner. Can stimulate the ATPase activity of the catalytic subunit of these complexes. May be required for CoREST dependent repression of neuronal specific gene promoters in non-neuronal cells. Belongs to the neural progenitors-specific chromatin remodeling complex (npBAF complex) and the neuron-specific chromatin remodeling complex (nBAF complex). During neural development a switch from a stem/progenitor to a postmitotic chromatin remodeling mechanism occurs as neurons exit the cell cycle and become committed to their adult state. The transition from proliferating neural stem/progenitor cells to postmitotic neurons requires a switch in subunit composition of the npBAF and nBAF complexes. As neural progenitors exit mitosis and differentiate into neurons, npBAF complexes which contain ACTL6A/BAF53A and PHF10/BAF45A, are exchanged for homologous alternative ACTL6B/BAF53B and DPF1/BAF45B or DPF3/BAF45C subunits in neuron-specific complexes (nBAF). The npBAF complex is essential for the self-renewal/proliferative capacity of the multipotent neural stem cells. The nBAF complex along with CREST plays a role regulating the activity of genes essential for dendrite growth (PubMed:17640523). Critical regulator of myeloid differentiation, controlling granulocytopoiesis and the expression of genes involved in neutrophil granule formation (PubMed:28369036).</text>
</comment>
<comment type="subunit">
    <text evidence="1 7 8 10 13 14">Component of the multiprotein chromatin-remodeling complexes SWI/SNF: SWI/SNF-A (BAF), SWI/SNF-B (PBAF) and related complexes. The canonical complex contains a catalytic subunit (either SMARCA4/BRG1/BAF190A or SMARCA2/BRM/BAF190B) and at least SMARCE1, ACTL6A/BAF53, SMARCC1/BAF155, SMARCC2/BAF170, and SMARCB1/SNF5/BAF47. Other subunits specific to each of the complexes may also be present permitting several possible combinations developmentally and tissue specific (Probable). Component of the BAF complex, which includes at least actin (ACTB), ARID1A/BAF250A, ARID1B/BAF250B, SMARCA2/BRM, SMARCA4/BRG1, ACTL6A/BAF53, ACTL6B/BAF53B, SMARCE1/BAF57, SMARCC1/BAF155, SMARCC2/BAF170, SMARCB1/SNF5/INI1, and one or more SMARCD1/BAF60A, SMARCD2/BAF60B, or SMARCD3/BAF60C. In muscle cells, the BAF complex also contains DPF3. Component of neural progenitors-specific chromatin remodeling complex (npBAF complex) composed of at least, ARID1A/BAF250A or ARID1B/BAF250B, SMARCD1/BAF60A, SMARCD3/BAF60C, SMARCA2/BRM/BAF190B, SMARCA4/BRG1/BAF190A, SMARCB1/BAF47, SMARCC1/BAF155, SMARCE1/BAF57, SMARCC2/BAF170, PHF10/BAF45A, ACTL6A/BAF53A and actin. Component of neuron-specific chromatin remodeling complex (nBAF complex) composed of at least, ARID1A/BAF250A or ARID1B/BAF250B, SMARCD1/BAF60A, SMARCD3/BAF60C, SMARCA2/BRM/BAF190B, SMARCA4/BRG1/BAF190A, SMARCB1/BAF47, SMARCC1/BAF155, SMARCE1/BAF57, SMARCC2/BAF170, DPF1/BAF45B, DPF3/BAF45C, ACTL6B/BAF53B and actin (PubMed:17640523). Component of the SWI/SNF-B (PBAF) chromatin remodeling complex, at least composed of SMARCA4/BRG1, SMARCB1/BAF47/SNF5, ACTL6A/BAF53A or ACTL6B/BAF53B, SMARCE1/BAF57, SMARCD1/BAF60A, SMARCD2/BAF60B, perhaps SMARCD3/BAF60C, SMARCC1/BAF155, SMARCC2/BAF170, PBRM1/BAF180, ARID2/BAF200 and actin (PubMed:22952240, PubMed:26601204). May also interact with the SIN3A histone deacetylase transcription repressor complex in conjunction with SMARCA2 and SMARCA4. Interacts with SMARD1 (By similarity). Interacts with KDM6B (PubMed:21095589). Interaction with RCOR1 (By similarity). Interacts with DPF2 (By similarity). Interacts with ERCC6 (By similarity). Interacts with FOS (PubMed:29272704).</text>
</comment>
<comment type="subcellular location">
    <subcellularLocation>
        <location>Nucleus</location>
    </subcellularLocation>
</comment>
<comment type="alternative products">
    <event type="alternative splicing"/>
    <isoform>
        <id>Q6PDG5-1</id>
        <name>1</name>
        <sequence type="displayed"/>
    </isoform>
    <isoform>
        <id>Q6PDG5-2</id>
        <name>2</name>
        <sequence type="described" ref="VSP_012492"/>
    </isoform>
</comment>
<comment type="developmental stage">
    <text evidence="7">Expressed ubiquitously throughout the developing spinal cord, brain and other embryonic tissues at 10.5-16.5 dpc.</text>
</comment>
<comment type="PTM">
    <text evidence="11">Mono-ADP-ribosylation at Lys-312 by SIRT6 promotes recruitment to the enhancer region of the Heme oxygenase-1 (HO-1) locus, leading to transcription activation of the locus.</text>
</comment>
<comment type="disruption phenotype">
    <text evidence="9">SMARCD2 knockout mice show aberrant hematopoiesis, characterized by defective myeloid and erythroid differentiation, a reduction in granulocyte/macrophage progenitors as well as reduced neutrophil granulocytes and monocytes. Knockout embryos die late during fetal development and are characterized by reduced size, pallor, and decreased temporal vascularization.</text>
</comment>
<comment type="similarity">
    <text evidence="15">Belongs to the SMARCC family.</text>
</comment>
<reference key="1">
    <citation type="journal article" date="2004" name="Genome Res.">
        <title>The status, quality, and expansion of the NIH full-length cDNA project: the Mammalian Gene Collection (MGC).</title>
        <authorList>
            <consortium name="The MGC Project Team"/>
        </authorList>
    </citation>
    <scope>NUCLEOTIDE SEQUENCE [LARGE SCALE MRNA] (ISOFORMS 1 AND 2)</scope>
    <source>
        <strain>C57BL/6J</strain>
        <tissue>Brain</tissue>
    </source>
</reference>
<reference key="2">
    <citation type="journal article" date="2004" name="Mol. Cell. Proteomics">
        <title>Phosphoproteomic analysis of the developing mouse brain.</title>
        <authorList>
            <person name="Ballif B.A."/>
            <person name="Villen J."/>
            <person name="Beausoleil S.A."/>
            <person name="Schwartz D."/>
            <person name="Gygi S.P."/>
        </authorList>
    </citation>
    <scope>PHOSPHORYLATION [LARGE SCALE ANALYSIS] AT SER-347</scope>
    <scope>IDENTIFICATION BY MASS SPECTROMETRY [LARGE SCALE ANALYSIS]</scope>
    <source>
        <tissue>Embryonic brain</tissue>
    </source>
</reference>
<reference key="3">
    <citation type="journal article" date="2006" name="Mol. Cell. Proteomics">
        <title>Comprehensive identification of phosphorylation sites in postsynaptic density preparations.</title>
        <authorList>
            <person name="Trinidad J.C."/>
            <person name="Specht C.G."/>
            <person name="Thalhammer A."/>
            <person name="Schoepfer R."/>
            <person name="Burlingame A.L."/>
        </authorList>
    </citation>
    <scope>IDENTIFICATION BY MASS SPECTROMETRY [LARGE SCALE ANALYSIS]</scope>
    <source>
        <tissue>Brain</tissue>
    </source>
</reference>
<reference key="4">
    <citation type="journal article" date="2007" name="Neuron">
        <title>An essential switch in subunit composition of a chromatin remodeling complex during neural development.</title>
        <authorList>
            <person name="Lessard J."/>
            <person name="Wu J.I."/>
            <person name="Ranish J.A."/>
            <person name="Wan M."/>
            <person name="Winslow M.M."/>
            <person name="Staahl B.T."/>
            <person name="Wu H."/>
            <person name="Aebersold R."/>
            <person name="Graef I.A."/>
            <person name="Crabtree G.R."/>
        </authorList>
    </citation>
    <scope>FUNCTION OF THE NBAF AND NPBAF COMPLEXES</scope>
    <scope>IDENTIFICATION BY MASS SPECTROMETRY</scope>
    <scope>IDENTIFICATION IN THE NBAF AND NPBAF COMPLEXES</scope>
    <scope>DEVELOPMENTAL STAGE</scope>
</reference>
<reference key="5">
    <citation type="journal article" date="2007" name="Proc. Natl. Acad. Sci. U.S.A.">
        <title>Large-scale phosphorylation analysis of mouse liver.</title>
        <authorList>
            <person name="Villen J."/>
            <person name="Beausoleil S.A."/>
            <person name="Gerber S.A."/>
            <person name="Gygi S.P."/>
        </authorList>
    </citation>
    <scope>PHOSPHORYLATION [LARGE SCALE ANALYSIS] AT SER-283; SER-286 AND SER-347</scope>
    <scope>IDENTIFICATION BY MASS SPECTROMETRY [LARGE SCALE ANALYSIS]</scope>
    <source>
        <tissue>Liver</tissue>
    </source>
</reference>
<reference key="6">
    <citation type="journal article" date="2009" name="Immunity">
        <title>The phagosomal proteome in interferon-gamma-activated macrophages.</title>
        <authorList>
            <person name="Trost M."/>
            <person name="English L."/>
            <person name="Lemieux S."/>
            <person name="Courcelles M."/>
            <person name="Desjardins M."/>
            <person name="Thibault P."/>
        </authorList>
    </citation>
    <scope>PHOSPHORYLATION [LARGE SCALE ANALYSIS] AT SER-283</scope>
    <scope>IDENTIFICATION BY MASS SPECTROMETRY [LARGE SCALE ANALYSIS]</scope>
</reference>
<reference key="7">
    <citation type="journal article" date="2010" name="Cell">
        <title>A tissue-specific atlas of mouse protein phosphorylation and expression.</title>
        <authorList>
            <person name="Huttlin E.L."/>
            <person name="Jedrychowski M.P."/>
            <person name="Elias J.E."/>
            <person name="Goswami T."/>
            <person name="Rad R."/>
            <person name="Beausoleil S.A."/>
            <person name="Villen J."/>
            <person name="Haas W."/>
            <person name="Sowa M.E."/>
            <person name="Gygi S.P."/>
        </authorList>
    </citation>
    <scope>PHOSPHORYLATION [LARGE SCALE ANALYSIS] AT SER-283; SER-286; SER-302; SER-304; SER-347 AND SER-387</scope>
    <scope>IDENTIFICATION BY MASS SPECTROMETRY [LARGE SCALE ANALYSIS]</scope>
    <source>
        <tissue>Brain</tissue>
        <tissue>Brown adipose tissue</tissue>
        <tissue>Heart</tissue>
        <tissue>Kidney</tissue>
        <tissue>Liver</tissue>
        <tissue>Lung</tissue>
        <tissue>Pancreas</tissue>
        <tissue>Spleen</tissue>
        <tissue>Testis</tissue>
    </source>
</reference>
<reference key="8">
    <citation type="journal article" date="2010" name="Mol. Cell">
        <title>Jmjd3 and UTX play a demethylase-independent role in chromatin remodeling to regulate T-box family member-dependent gene expression.</title>
        <authorList>
            <person name="Miller S.A."/>
            <person name="Mohn S.E."/>
            <person name="Weinmann A.S."/>
        </authorList>
    </citation>
    <scope>INTERACTION WITH KDM6B</scope>
</reference>
<reference key="9">
    <citation type="journal article" date="2012" name="J. Biol. Chem.">
        <title>SWI/SNF chromatin-remodeling factors: multiscale analyses and diverse functions.</title>
        <authorList>
            <person name="Euskirchen G."/>
            <person name="Auerbach R.K."/>
            <person name="Snyder M."/>
        </authorList>
    </citation>
    <scope>REVIEW ON SWI/SNF CHROMATIN REMODELING COMPLEXES</scope>
</reference>
<reference key="10">
    <citation type="journal article" date="2015" name="Sci. Adv.">
        <title>Mammalian SWI/SNF chromatin remodeling complexes and cancer: Mechanistic insights gained from human genomics.</title>
        <authorList>
            <person name="Kadoch C."/>
            <person name="Crabtree G.R."/>
        </authorList>
    </citation>
    <scope>REVIEW ON SWI/SNF CHROMATIN REMODELING COMPLEXES</scope>
</reference>
<reference key="11">
    <citation type="journal article" date="2017" name="Mol. Cell">
        <title>AP-1 Transcription Factors and the BAF Complex Mediate Signal-Dependent Enhancer Selection.</title>
        <authorList>
            <person name="Vierbuchen T."/>
            <person name="Ling E."/>
            <person name="Cowley C.J."/>
            <person name="Couch C.H."/>
            <person name="Wang X."/>
            <person name="Harmin D.A."/>
            <person name="Roberts C.W.M."/>
            <person name="Greenberg M.E."/>
        </authorList>
    </citation>
    <scope>INTERACTION WITH FOS</scope>
</reference>
<reference key="12">
    <citation type="journal article" date="2017" name="Nat. Genet.">
        <title>Chromatin-remodeling factor SMARCD2 regulates transcriptional networks controlling differentiation of neutrophil granulocytes.</title>
        <authorList>
            <person name="Witzel M."/>
            <person name="Petersheim D."/>
            <person name="Fan Y."/>
            <person name="Bahrami E."/>
            <person name="Racek T."/>
            <person name="Rohlfs M."/>
            <person name="Puchalka J."/>
            <person name="Mertes C."/>
            <person name="Gagneur J."/>
            <person name="Ziegenhain C."/>
            <person name="Enard W."/>
            <person name="Stray-Pedersen A."/>
            <person name="Arkwright P.D."/>
            <person name="Abboud M.R."/>
            <person name="Pazhakh V."/>
            <person name="Lieschke G.J."/>
            <person name="Krawitz P.M."/>
            <person name="Dahlhoff M."/>
            <person name="Schneider M.R."/>
            <person name="Wolf E."/>
            <person name="Horny H.P."/>
            <person name="Schmidt H."/>
            <person name="Schaeffer A.A."/>
            <person name="Klein C."/>
        </authorList>
    </citation>
    <scope>FUNCTION</scope>
    <scope>DISRUPTION PHENOTYPE</scope>
</reference>
<reference key="13">
    <citation type="journal article" date="2019" name="Nucleic Acids Res.">
        <title>SIRT6 promotes transcription of a subset of NRF2 targets by mono-ADP-ribosylating BAF170.</title>
        <authorList>
            <person name="Rezazadeh S."/>
            <person name="Yang D."/>
            <person name="Tombline G."/>
            <person name="Simon M."/>
            <person name="Regan S.P."/>
            <person name="Seluanov A."/>
            <person name="Gorbunova V."/>
        </authorList>
    </citation>
    <scope>FUNCTION</scope>
    <scope>ADP-RIBOSYLATION AT LYS-312</scope>
    <scope>MUTAGENESIS OF LYS-312</scope>
</reference>
<keyword id="KW-0007">Acetylation</keyword>
<keyword id="KW-0013">ADP-ribosylation</keyword>
<keyword id="KW-0025">Alternative splicing</keyword>
<keyword id="KW-0156">Chromatin regulator</keyword>
<keyword id="KW-0175">Coiled coil</keyword>
<keyword id="KW-1017">Isopeptide bond</keyword>
<keyword id="KW-0524">Neurogenesis</keyword>
<keyword id="KW-0539">Nucleus</keyword>
<keyword id="KW-0597">Phosphoprotein</keyword>
<keyword id="KW-1185">Reference proteome</keyword>
<keyword id="KW-0804">Transcription</keyword>
<keyword id="KW-0805">Transcription regulation</keyword>
<keyword id="KW-0832">Ubl conjugation</keyword>
<feature type="chain" id="PRO_0000197118" description="SWI/SNF complex subunit SMARCC2">
    <location>
        <begin position="1"/>
        <end position="1213"/>
    </location>
</feature>
<feature type="domain" description="MarR-like" evidence="5">
    <location>
        <begin position="10"/>
        <end position="136"/>
    </location>
</feature>
<feature type="domain" description="BRCT; N-terminus" evidence="5">
    <location>
        <begin position="140"/>
        <end position="183"/>
    </location>
</feature>
<feature type="domain" description="Chromo" evidence="5">
    <location>
        <begin position="189"/>
        <end position="217"/>
    </location>
</feature>
<feature type="domain" description="BRCT; C-terminus" evidence="5">
    <location>
        <begin position="233"/>
        <end position="257"/>
    </location>
</feature>
<feature type="domain" description="SWIRM" evidence="3">
    <location>
        <begin position="424"/>
        <end position="521"/>
    </location>
</feature>
<feature type="domain" description="SANT" evidence="4">
    <location>
        <begin position="596"/>
        <end position="647"/>
    </location>
</feature>
<feature type="region of interest" description="MarR-like, BRCT and chromo domains module" evidence="5">
    <location>
        <begin position="1"/>
        <end position="274"/>
    </location>
</feature>
<feature type="region of interest" description="Disordered" evidence="6">
    <location>
        <begin position="256"/>
        <end position="413"/>
    </location>
</feature>
<feature type="region of interest" description="Disordered" evidence="6">
    <location>
        <begin position="724"/>
        <end position="848"/>
    </location>
</feature>
<feature type="region of interest" description="Disordered" evidence="6">
    <location>
        <begin position="947"/>
        <end position="1073"/>
    </location>
</feature>
<feature type="region of interest" description="Disordered" evidence="6">
    <location>
        <begin position="1181"/>
        <end position="1213"/>
    </location>
</feature>
<feature type="coiled-coil region" evidence="2">
    <location>
        <begin position="907"/>
        <end position="934"/>
    </location>
</feature>
<feature type="compositionally biased region" description="Polar residues" evidence="6">
    <location>
        <begin position="275"/>
        <end position="284"/>
    </location>
</feature>
<feature type="compositionally biased region" description="Basic and acidic residues" evidence="6">
    <location>
        <begin position="331"/>
        <end position="344"/>
    </location>
</feature>
<feature type="compositionally biased region" description="Acidic residues" evidence="6">
    <location>
        <begin position="379"/>
        <end position="398"/>
    </location>
</feature>
<feature type="compositionally biased region" description="Basic and acidic residues" evidence="6">
    <location>
        <begin position="747"/>
        <end position="777"/>
    </location>
</feature>
<feature type="compositionally biased region" description="Basic and acidic residues" evidence="6">
    <location>
        <begin position="788"/>
        <end position="848"/>
    </location>
</feature>
<feature type="compositionally biased region" description="Low complexity" evidence="6">
    <location>
        <begin position="949"/>
        <end position="962"/>
    </location>
</feature>
<feature type="compositionally biased region" description="Pro residues" evidence="6">
    <location>
        <begin position="963"/>
        <end position="974"/>
    </location>
</feature>
<feature type="compositionally biased region" description="Low complexity" evidence="6">
    <location>
        <begin position="975"/>
        <end position="1033"/>
    </location>
</feature>
<feature type="compositionally biased region" description="Pro residues" evidence="6">
    <location>
        <begin position="1034"/>
        <end position="1060"/>
    </location>
</feature>
<feature type="compositionally biased region" description="Pro residues" evidence="6">
    <location>
        <begin position="1185"/>
        <end position="1201"/>
    </location>
</feature>
<feature type="modified residue" description="Phosphoserine" evidence="17 18 19">
    <location>
        <position position="283"/>
    </location>
</feature>
<feature type="modified residue" description="Phosphoserine" evidence="17 19">
    <location>
        <position position="286"/>
    </location>
</feature>
<feature type="modified residue" description="Phosphoserine" evidence="19">
    <location>
        <position position="302"/>
    </location>
</feature>
<feature type="modified residue" description="Phosphoserine" evidence="19">
    <location>
        <position position="304"/>
    </location>
</feature>
<feature type="modified residue" description="Phosphoserine" evidence="1">
    <location>
        <position position="306"/>
    </location>
</feature>
<feature type="modified residue" description="N6-(ADP-ribosyl)lysine" evidence="11">
    <location>
        <position position="312"/>
    </location>
</feature>
<feature type="modified residue" description="N6-acetyllysine" evidence="1">
    <location>
        <position position="326"/>
    </location>
</feature>
<feature type="modified residue" description="Phosphoserine" evidence="16 17 19">
    <location>
        <position position="347"/>
    </location>
</feature>
<feature type="modified residue" description="Phosphoserine" evidence="19">
    <location>
        <position position="387"/>
    </location>
</feature>
<feature type="modified residue" description="Phosphoserine" evidence="1">
    <location>
        <position position="813"/>
    </location>
</feature>
<feature type="cross-link" description="Glycyl lysine isopeptide (Lys-Gly) (interchain with G-Cter in SUMO2)" evidence="1">
    <location>
        <position position="564"/>
    </location>
</feature>
<feature type="cross-link" description="Glycyl lysine isopeptide (Lys-Gly) (interchain with G-Cter in SUMO2)" evidence="1">
    <location>
        <position position="566"/>
    </location>
</feature>
<feature type="cross-link" description="Glycyl lysine isopeptide (Lys-Gly) (interchain with G-Cter in SUMO2)" evidence="1">
    <location>
        <position position="568"/>
    </location>
</feature>
<feature type="cross-link" description="Glycyl lysine isopeptide (Lys-Gly) (interchain with G-Cter in SUMO2)" evidence="1">
    <location>
        <position position="592"/>
    </location>
</feature>
<feature type="cross-link" description="Glycyl lysine isopeptide (Lys-Gly) (interchain with G-Cter in SUMO2)" evidence="1">
    <location>
        <position position="704"/>
    </location>
</feature>
<feature type="cross-link" description="Glycyl lysine isopeptide (Lys-Gly) (interchain with G-Cter in SUMO2)" evidence="1">
    <location>
        <position position="787"/>
    </location>
</feature>
<feature type="cross-link" description="Glycyl lysine isopeptide (Lys-Gly) (interchain with G-Cter in SUMO2)" evidence="1">
    <location>
        <position position="848"/>
    </location>
</feature>
<feature type="splice variant" id="VSP_012492" description="In isoform 2." evidence="12">
    <location>
        <begin position="1075"/>
        <end position="1188"/>
    </location>
</feature>
<feature type="mutagenesis site" description="Abolished mono-ADP-ribosylation by SIRT6 and recruitment to the enhancer region of the Heme oxygenase-1 (HO-1) locus." evidence="11">
    <original>K</original>
    <variation>A</variation>
    <location>
        <position position="312"/>
    </location>
</feature>
<feature type="sequence conflict" description="In Ref. 1; AAH62102." evidence="15" ref="1">
    <location>
        <position position="550"/>
    </location>
</feature>
<organism>
    <name type="scientific">Mus musculus</name>
    <name type="common">Mouse</name>
    <dbReference type="NCBI Taxonomy" id="10090"/>
    <lineage>
        <taxon>Eukaryota</taxon>
        <taxon>Metazoa</taxon>
        <taxon>Chordata</taxon>
        <taxon>Craniata</taxon>
        <taxon>Vertebrata</taxon>
        <taxon>Euteleostomi</taxon>
        <taxon>Mammalia</taxon>
        <taxon>Eutheria</taxon>
        <taxon>Euarchontoglires</taxon>
        <taxon>Glires</taxon>
        <taxon>Rodentia</taxon>
        <taxon>Myomorpha</taxon>
        <taxon>Muroidea</taxon>
        <taxon>Muridae</taxon>
        <taxon>Murinae</taxon>
        <taxon>Mus</taxon>
        <taxon>Mus</taxon>
    </lineage>
</organism>
<evidence type="ECO:0000250" key="1">
    <source>
        <dbReference type="UniProtKB" id="Q8TAQ2"/>
    </source>
</evidence>
<evidence type="ECO:0000255" key="2"/>
<evidence type="ECO:0000255" key="3">
    <source>
        <dbReference type="PROSITE-ProRule" id="PRU00247"/>
    </source>
</evidence>
<evidence type="ECO:0000255" key="4">
    <source>
        <dbReference type="PROSITE-ProRule" id="PRU00624"/>
    </source>
</evidence>
<evidence type="ECO:0000255" key="5">
    <source>
        <dbReference type="PROSITE-ProRule" id="PRU01376"/>
    </source>
</evidence>
<evidence type="ECO:0000256" key="6">
    <source>
        <dbReference type="SAM" id="MobiDB-lite"/>
    </source>
</evidence>
<evidence type="ECO:0000269" key="7">
    <source>
    </source>
</evidence>
<evidence type="ECO:0000269" key="8">
    <source>
    </source>
</evidence>
<evidence type="ECO:0000269" key="9">
    <source>
    </source>
</evidence>
<evidence type="ECO:0000269" key="10">
    <source>
    </source>
</evidence>
<evidence type="ECO:0000269" key="11">
    <source>
    </source>
</evidence>
<evidence type="ECO:0000303" key="12">
    <source>
    </source>
</evidence>
<evidence type="ECO:0000303" key="13">
    <source>
    </source>
</evidence>
<evidence type="ECO:0000303" key="14">
    <source>
    </source>
</evidence>
<evidence type="ECO:0000305" key="15"/>
<evidence type="ECO:0007744" key="16">
    <source>
    </source>
</evidence>
<evidence type="ECO:0007744" key="17">
    <source>
    </source>
</evidence>
<evidence type="ECO:0007744" key="18">
    <source>
    </source>
</evidence>
<evidence type="ECO:0007744" key="19">
    <source>
    </source>
</evidence>
<name>SMRC2_MOUSE</name>
<dbReference type="EMBL" id="BC058720">
    <property type="protein sequence ID" value="AAH58720.1"/>
    <property type="molecule type" value="mRNA"/>
</dbReference>
<dbReference type="EMBL" id="BC062102">
    <property type="protein sequence ID" value="AAH62102.1"/>
    <property type="molecule type" value="mRNA"/>
</dbReference>
<dbReference type="CCDS" id="CCDS24278.1">
    <molecule id="Q6PDG5-2"/>
</dbReference>
<dbReference type="CCDS" id="CCDS48727.1">
    <molecule id="Q6PDG5-1"/>
</dbReference>
<dbReference type="RefSeq" id="NP_001107568.1">
    <property type="nucleotide sequence ID" value="NM_001114096.1"/>
</dbReference>
<dbReference type="RefSeq" id="NP_001107569.1">
    <molecule id="Q6PDG5-1"/>
    <property type="nucleotide sequence ID" value="NM_001114097.1"/>
</dbReference>
<dbReference type="RefSeq" id="NP_937803.1">
    <molecule id="Q6PDG5-2"/>
    <property type="nucleotide sequence ID" value="NM_198160.2"/>
</dbReference>
<dbReference type="SMR" id="Q6PDG5"/>
<dbReference type="BioGRID" id="212652">
    <property type="interactions" value="30"/>
</dbReference>
<dbReference type="ComplexPortal" id="CPX-1232">
    <property type="entry name" value="SWI/SNF ATP-dependent chromatin remodeling complex, ACTL6A-ARID1A-SMARCA2 variant"/>
</dbReference>
<dbReference type="ComplexPortal" id="CPX-1233">
    <property type="entry name" value="SWI/SNF ATP-dependent chromatin remodeling complex, ACTL6A-ARID1A-SMARCA4 variant"/>
</dbReference>
<dbReference type="ComplexPortal" id="CPX-1234">
    <property type="entry name" value="SWI/SNF ATP-dependent chromatin remodeling complex, ACTL6A-ARID1B-SMARCA2 variant"/>
</dbReference>
<dbReference type="ComplexPortal" id="CPX-1235">
    <property type="entry name" value="SWI/SNF ATP-dependent chromatin remodeling complex, ACTL6A-ARID1B-SMARCA4 variant"/>
</dbReference>
<dbReference type="ComplexPortal" id="CPX-1236">
    <property type="entry name" value="SWI/SNF ATP-dependent chromatin remodeling complex, ACTL6B-ARID1A-SMARCA2 variant"/>
</dbReference>
<dbReference type="ComplexPortal" id="CPX-1237">
    <property type="entry name" value="SWI/SNF ATP-dependent chromatin remodeling complex, ACTL6B-ARID1A-SMARCA4 variant"/>
</dbReference>
<dbReference type="ComplexPortal" id="CPX-1238">
    <property type="entry name" value="SWI/SNF ATP-dependent chromatin remodeling complex, ACTL6B-ARID1B-SMARCA2 variant"/>
</dbReference>
<dbReference type="ComplexPortal" id="CPX-1239">
    <property type="entry name" value="SWI/SNF ATP-dependent chromatin remodeling complex, ACTL6B-ARID1B-SMARCA4 variant"/>
</dbReference>
<dbReference type="ComplexPortal" id="CPX-1240">
    <property type="entry name" value="Muscle cell-specific SWI/SNF ATP-dependent chromatin remodeling complex, ACTL6A-ARID1A-SMARCA2 variant"/>
</dbReference>
<dbReference type="ComplexPortal" id="CPX-1241">
    <property type="entry name" value="Muscle cell-specific SWI/SNF ATP-dependent chromatin remodeling complex, ACTL6A-ARID1A-SMARCA4 variant"/>
</dbReference>
<dbReference type="ComplexPortal" id="CPX-1242">
    <property type="entry name" value="Muscle cell-specific SWI/SNF ATP-dependent chromatin remodeling complex, ACTL6A-ARID1B-SMARCA2 variant"/>
</dbReference>
<dbReference type="ComplexPortal" id="CPX-1243">
    <property type="entry name" value="Muscle cell-specific SWI/SNF ATP-dependent chromatin remodeling complex, ACTL6A-ARID1B-SMARCA4 variant"/>
</dbReference>
<dbReference type="ComplexPortal" id="CPX-1244">
    <property type="entry name" value="Muscle cell-specific SWI/SNF ATP-dependent chromatin remodeling complex, ACTL6B-ARID1A-SMARCA2 variant"/>
</dbReference>
<dbReference type="ComplexPortal" id="CPX-1245">
    <property type="entry name" value="Muscle cell-specific SWI/SNF ATP-dependent chromatin remodeling complex, ACTL6B-ARID1A-SMARCA4 variant"/>
</dbReference>
<dbReference type="ComplexPortal" id="CPX-1246">
    <property type="entry name" value="Muscle cell-specific SWI/SNF ATP-dependent chromatin remodeling complex, ACTL6B-ARID1B-SMARCA2 variant"/>
</dbReference>
<dbReference type="ComplexPortal" id="CPX-1247">
    <property type="entry name" value="Muscle cell-specific SWI/SNF ATP-dependent chromatin remodeling complex, ACTL6B-ARID1B-SMARCA4 variant"/>
</dbReference>
<dbReference type="ComplexPortal" id="CPX-1248">
    <property type="entry name" value="Polybromo-associated SWI/SNF ATP-dependent chromatin remodeling complex, ACTL6A variant"/>
</dbReference>
<dbReference type="ComplexPortal" id="CPX-1250">
    <property type="entry name" value="Polybromo-associated SWI/SNF ATP-dependent chromatin remodeling complex, ACTL6B variant"/>
</dbReference>
<dbReference type="ComplexPortal" id="CPX-1252">
    <property type="entry name" value="Neural progenitor-specific SWI/SNF ATP-dependent chromatin remodeling complex, ARID1A-SMARCA2 variant"/>
</dbReference>
<dbReference type="ComplexPortal" id="CPX-1253">
    <property type="entry name" value="Neural progenitor-specific SWI/SNF ATP-dependent chromatin remodeling complex, ARID1A-SMARCA4 variant"/>
</dbReference>
<dbReference type="ComplexPortal" id="CPX-1254">
    <property type="entry name" value="Neural progenitor-specific SWI/SNF ATP-dependent chromatin remodeling complex, ARID1B-SMARCA2 variant"/>
</dbReference>
<dbReference type="ComplexPortal" id="CPX-1255">
    <property type="entry name" value="Neural progenitor-specific SWI/SNF ATP-dependent chromatin remodeling complex, ARID1B-SMARCA4 variant"/>
</dbReference>
<dbReference type="ComplexPortal" id="CPX-1256">
    <property type="entry name" value="Neuron-specific SWI/SNF ATP-dependent chromatin remodeling complex, ARID1A-SMARCA2 variant"/>
</dbReference>
<dbReference type="ComplexPortal" id="CPX-1257">
    <property type="entry name" value="Neuron-specific SWI/SNF ATP-dependent chromatin remodeling complex, ARID1A-SMARCA4 variant"/>
</dbReference>
<dbReference type="ComplexPortal" id="CPX-1258">
    <property type="entry name" value="Neuron-specific SWI/SNF ATP-dependent chromatin remodeling complex, ARID1B-SMARCA2 variant"/>
</dbReference>
<dbReference type="ComplexPortal" id="CPX-1259">
    <property type="entry name" value="Neuron-specific SWI/SNF ATP-dependent chromatin remodeling complex, ARID1B-SMARCA4 variant"/>
</dbReference>
<dbReference type="ComplexPortal" id="CPX-1261">
    <property type="entry name" value="Brain-specific SWI/SNF ATP-dependent chromatin remodeling complex, ARID1A-SMARCA2 variant"/>
</dbReference>
<dbReference type="ComplexPortal" id="CPX-1262">
    <property type="entry name" value="Brain-specific SWI/SNF ATP-dependent chromatin remodeling complex, ARID1A-SMARCA4 variant"/>
</dbReference>
<dbReference type="ComplexPortal" id="CPX-1263">
    <property type="entry name" value="Brain-specific SWI/SNF ATP-dependent chromatin remodeling complex, ARID1B-SMARCA2 variant"/>
</dbReference>
<dbReference type="ComplexPortal" id="CPX-1264">
    <property type="entry name" value="Brain-specific SWI/SNF ATP-dependent chromatin remodeling complex, ARID1B-SMARCA4 variant"/>
</dbReference>
<dbReference type="CORUM" id="Q6PDG5"/>
<dbReference type="DIP" id="DIP-48884N"/>
<dbReference type="FunCoup" id="Q6PDG5">
    <property type="interactions" value="4233"/>
</dbReference>
<dbReference type="IntAct" id="Q6PDG5">
    <property type="interactions" value="12"/>
</dbReference>
<dbReference type="MINT" id="Q6PDG5"/>
<dbReference type="STRING" id="10090.ENSMUSP00000100868"/>
<dbReference type="GlyGen" id="Q6PDG5">
    <property type="glycosylation" value="6 sites, 1 O-linked glycan (1 site)"/>
</dbReference>
<dbReference type="iPTMnet" id="Q6PDG5"/>
<dbReference type="PhosphoSitePlus" id="Q6PDG5"/>
<dbReference type="SwissPalm" id="Q6PDG5"/>
<dbReference type="jPOST" id="Q6PDG5"/>
<dbReference type="PaxDb" id="10090-ENSMUSP00000100868"/>
<dbReference type="PeptideAtlas" id="Q6PDG5"/>
<dbReference type="ProteomicsDB" id="261278">
    <molecule id="Q6PDG5-1"/>
</dbReference>
<dbReference type="ProteomicsDB" id="261279">
    <molecule id="Q6PDG5-2"/>
</dbReference>
<dbReference type="Pumba" id="Q6PDG5"/>
<dbReference type="Antibodypedia" id="3811">
    <property type="antibodies" value="259 antibodies from 31 providers"/>
</dbReference>
<dbReference type="DNASU" id="68094"/>
<dbReference type="Ensembl" id="ENSMUST00000026433.9">
    <molecule id="Q6PDG5-2"/>
    <property type="protein sequence ID" value="ENSMUSP00000026433.8"/>
    <property type="gene ID" value="ENSMUSG00000025369.16"/>
</dbReference>
<dbReference type="Ensembl" id="ENSMUST00000105235.10">
    <molecule id="Q6PDG5-1"/>
    <property type="protein sequence ID" value="ENSMUSP00000100868.3"/>
    <property type="gene ID" value="ENSMUSG00000025369.16"/>
</dbReference>
<dbReference type="GeneID" id="68094"/>
<dbReference type="KEGG" id="mmu:68094"/>
<dbReference type="UCSC" id="uc007hmw.2">
    <molecule id="Q6PDG5-2"/>
    <property type="organism name" value="mouse"/>
</dbReference>
<dbReference type="UCSC" id="uc007hmx.2">
    <molecule id="Q6PDG5-1"/>
    <property type="organism name" value="mouse"/>
</dbReference>
<dbReference type="AGR" id="MGI:1915344"/>
<dbReference type="CTD" id="6601"/>
<dbReference type="MGI" id="MGI:1915344">
    <property type="gene designation" value="Smarcc2"/>
</dbReference>
<dbReference type="VEuPathDB" id="HostDB:ENSMUSG00000025369"/>
<dbReference type="eggNOG" id="KOG1279">
    <property type="taxonomic scope" value="Eukaryota"/>
</dbReference>
<dbReference type="GeneTree" id="ENSGT00940000155746"/>
<dbReference type="HOGENOM" id="CLU_004447_0_1_1"/>
<dbReference type="InParanoid" id="Q6PDG5"/>
<dbReference type="OMA" id="KGGTIMD"/>
<dbReference type="OrthoDB" id="118550at2759"/>
<dbReference type="PhylomeDB" id="Q6PDG5"/>
<dbReference type="TreeFam" id="TF314710"/>
<dbReference type="Reactome" id="R-MMU-3214858">
    <property type="pathway name" value="RMTs methylate histone arginines"/>
</dbReference>
<dbReference type="Reactome" id="R-MMU-8939243">
    <property type="pathway name" value="RUNX1 interacts with co-factors whose precise effect on RUNX1 targets is not known"/>
</dbReference>
<dbReference type="BioGRID-ORCS" id="68094">
    <property type="hits" value="4 hits in 83 CRISPR screens"/>
</dbReference>
<dbReference type="ChiTaRS" id="Smarcc2">
    <property type="organism name" value="mouse"/>
</dbReference>
<dbReference type="PRO" id="PR:Q6PDG5"/>
<dbReference type="Proteomes" id="UP000000589">
    <property type="component" value="Chromosome 10"/>
</dbReference>
<dbReference type="RNAct" id="Q6PDG5">
    <property type="molecule type" value="protein"/>
</dbReference>
<dbReference type="Bgee" id="ENSMUSG00000025369">
    <property type="expression patterns" value="Expressed in embryonic brain and 235 other cell types or tissues"/>
</dbReference>
<dbReference type="ExpressionAtlas" id="Q6PDG5">
    <property type="expression patterns" value="baseline and differential"/>
</dbReference>
<dbReference type="GO" id="GO:0140092">
    <property type="term" value="C:bBAF complex"/>
    <property type="evidence" value="ECO:0000303"/>
    <property type="project" value="ComplexPortal"/>
</dbReference>
<dbReference type="GO" id="GO:0035060">
    <property type="term" value="C:brahma complex"/>
    <property type="evidence" value="ECO:0000303"/>
    <property type="project" value="ComplexPortal"/>
</dbReference>
<dbReference type="GO" id="GO:0000785">
    <property type="term" value="C:chromatin"/>
    <property type="evidence" value="ECO:0000303"/>
    <property type="project" value="ComplexPortal"/>
</dbReference>
<dbReference type="GO" id="GO:0000776">
    <property type="term" value="C:kinetochore"/>
    <property type="evidence" value="ECO:0000303"/>
    <property type="project" value="ComplexPortal"/>
</dbReference>
<dbReference type="GO" id="GO:0071565">
    <property type="term" value="C:nBAF complex"/>
    <property type="evidence" value="ECO:0000314"/>
    <property type="project" value="UniProtKB"/>
</dbReference>
<dbReference type="GO" id="GO:0071564">
    <property type="term" value="C:npBAF complex"/>
    <property type="evidence" value="ECO:0000314"/>
    <property type="project" value="UniProtKB"/>
</dbReference>
<dbReference type="GO" id="GO:0016363">
    <property type="term" value="C:nuclear matrix"/>
    <property type="evidence" value="ECO:0000303"/>
    <property type="project" value="ComplexPortal"/>
</dbReference>
<dbReference type="GO" id="GO:0005654">
    <property type="term" value="C:nucleoplasm"/>
    <property type="evidence" value="ECO:0000304"/>
    <property type="project" value="Reactome"/>
</dbReference>
<dbReference type="GO" id="GO:0016586">
    <property type="term" value="C:RSC-type complex"/>
    <property type="evidence" value="ECO:0000303"/>
    <property type="project" value="ComplexPortal"/>
</dbReference>
<dbReference type="GO" id="GO:0016514">
    <property type="term" value="C:SWI/SNF complex"/>
    <property type="evidence" value="ECO:0000314"/>
    <property type="project" value="MGI"/>
</dbReference>
<dbReference type="GO" id="GO:0003682">
    <property type="term" value="F:chromatin binding"/>
    <property type="evidence" value="ECO:0000314"/>
    <property type="project" value="MGI"/>
</dbReference>
<dbReference type="GO" id="GO:0006338">
    <property type="term" value="P:chromatin remodeling"/>
    <property type="evidence" value="ECO:0000303"/>
    <property type="project" value="ComplexPortal"/>
</dbReference>
<dbReference type="GO" id="GO:0000122">
    <property type="term" value="P:negative regulation of transcription by RNA polymerase II"/>
    <property type="evidence" value="ECO:0000316"/>
    <property type="project" value="MGI"/>
</dbReference>
<dbReference type="GO" id="GO:0007399">
    <property type="term" value="P:nervous system development"/>
    <property type="evidence" value="ECO:0007669"/>
    <property type="project" value="UniProtKB-KW"/>
</dbReference>
<dbReference type="GO" id="GO:0045597">
    <property type="term" value="P:positive regulation of cell differentiation"/>
    <property type="evidence" value="ECO:0000303"/>
    <property type="project" value="ComplexPortal"/>
</dbReference>
<dbReference type="GO" id="GO:2000781">
    <property type="term" value="P:positive regulation of double-strand break repair"/>
    <property type="evidence" value="ECO:0000303"/>
    <property type="project" value="ComplexPortal"/>
</dbReference>
<dbReference type="GO" id="GO:0045663">
    <property type="term" value="P:positive regulation of myoblast differentiation"/>
    <property type="evidence" value="ECO:0000303"/>
    <property type="project" value="ComplexPortal"/>
</dbReference>
<dbReference type="GO" id="GO:0045582">
    <property type="term" value="P:positive regulation of T cell differentiation"/>
    <property type="evidence" value="ECO:0000303"/>
    <property type="project" value="ComplexPortal"/>
</dbReference>
<dbReference type="GO" id="GO:0070316">
    <property type="term" value="P:regulation of G0 to G1 transition"/>
    <property type="evidence" value="ECO:0000303"/>
    <property type="project" value="ComplexPortal"/>
</dbReference>
<dbReference type="GO" id="GO:2000045">
    <property type="term" value="P:regulation of G1/S transition of mitotic cell cycle"/>
    <property type="evidence" value="ECO:0000303"/>
    <property type="project" value="ComplexPortal"/>
</dbReference>
<dbReference type="GO" id="GO:0030071">
    <property type="term" value="P:regulation of mitotic metaphase/anaphase transition"/>
    <property type="evidence" value="ECO:0000303"/>
    <property type="project" value="ComplexPortal"/>
</dbReference>
<dbReference type="GO" id="GO:2000819">
    <property type="term" value="P:regulation of nucleotide-excision repair"/>
    <property type="evidence" value="ECO:0000303"/>
    <property type="project" value="ComplexPortal"/>
</dbReference>
<dbReference type="GO" id="GO:0006357">
    <property type="term" value="P:regulation of transcription by RNA polymerase II"/>
    <property type="evidence" value="ECO:0000315"/>
    <property type="project" value="MGI"/>
</dbReference>
<dbReference type="GO" id="GO:0006366">
    <property type="term" value="P:transcription by RNA polymerase II"/>
    <property type="evidence" value="ECO:0000316"/>
    <property type="project" value="MGI"/>
</dbReference>
<dbReference type="FunFam" id="1.10.10.60:FF:000014">
    <property type="entry name" value="SWI/SNF complex subunit SMARCC2 isoform C"/>
    <property type="match status" value="1"/>
</dbReference>
<dbReference type="FunFam" id="1.10.10.10:FF:000020">
    <property type="entry name" value="SWI/SNF complex subunit SMARCC2 isoform c"/>
    <property type="match status" value="1"/>
</dbReference>
<dbReference type="Gene3D" id="1.10.10.60">
    <property type="entry name" value="Homeodomain-like"/>
    <property type="match status" value="1"/>
</dbReference>
<dbReference type="Gene3D" id="1.10.10.10">
    <property type="entry name" value="Winged helix-like DNA-binding domain superfamily/Winged helix DNA-binding domain"/>
    <property type="match status" value="1"/>
</dbReference>
<dbReference type="InterPro" id="IPR036420">
    <property type="entry name" value="BRCT_dom_sf"/>
</dbReference>
<dbReference type="InterPro" id="IPR000953">
    <property type="entry name" value="Chromo/chromo_shadow_dom"/>
</dbReference>
<dbReference type="InterPro" id="IPR009057">
    <property type="entry name" value="Homeodomain-like_sf"/>
</dbReference>
<dbReference type="InterPro" id="IPR049898">
    <property type="entry name" value="MARR_BRCT_CHROMO"/>
</dbReference>
<dbReference type="InterPro" id="IPR001005">
    <property type="entry name" value="SANT/Myb"/>
</dbReference>
<dbReference type="InterPro" id="IPR017884">
    <property type="entry name" value="SANT_dom"/>
</dbReference>
<dbReference type="InterPro" id="IPR032451">
    <property type="entry name" value="SMARCC_C"/>
</dbReference>
<dbReference type="InterPro" id="IPR032450">
    <property type="entry name" value="SMARCC_N"/>
</dbReference>
<dbReference type="InterPro" id="IPR007526">
    <property type="entry name" value="SWIRM"/>
</dbReference>
<dbReference type="InterPro" id="IPR032448">
    <property type="entry name" value="SWIRM-assoc"/>
</dbReference>
<dbReference type="InterPro" id="IPR036388">
    <property type="entry name" value="WH-like_DNA-bd_sf"/>
</dbReference>
<dbReference type="PANTHER" id="PTHR15381:SF1">
    <property type="entry name" value="CHONDROITIN SULFATE PROTEOGLYCAN 5"/>
    <property type="match status" value="1"/>
</dbReference>
<dbReference type="PANTHER" id="PTHR15381">
    <property type="entry name" value="CHONDROITIN SULFATE PROTEOGLYCAN 5 -RELATED"/>
    <property type="match status" value="1"/>
</dbReference>
<dbReference type="Pfam" id="PF00249">
    <property type="entry name" value="Myb_DNA-binding"/>
    <property type="match status" value="1"/>
</dbReference>
<dbReference type="Pfam" id="PF04433">
    <property type="entry name" value="SWIRM"/>
    <property type="match status" value="1"/>
</dbReference>
<dbReference type="Pfam" id="PF16495">
    <property type="entry name" value="SWIRM-assoc_1"/>
    <property type="match status" value="1"/>
</dbReference>
<dbReference type="Pfam" id="PF16496">
    <property type="entry name" value="SWIRM-assoc_2"/>
    <property type="match status" value="1"/>
</dbReference>
<dbReference type="Pfam" id="PF16498">
    <property type="entry name" value="SWIRM-assoc_3"/>
    <property type="match status" value="1"/>
</dbReference>
<dbReference type="SMART" id="SM00298">
    <property type="entry name" value="CHROMO"/>
    <property type="match status" value="1"/>
</dbReference>
<dbReference type="SMART" id="SM00717">
    <property type="entry name" value="SANT"/>
    <property type="match status" value="1"/>
</dbReference>
<dbReference type="SUPFAM" id="SSF52113">
    <property type="entry name" value="BRCT domain"/>
    <property type="match status" value="1"/>
</dbReference>
<dbReference type="SUPFAM" id="SSF46689">
    <property type="entry name" value="Homeodomain-like"/>
    <property type="match status" value="2"/>
</dbReference>
<dbReference type="PROSITE" id="PS52032">
    <property type="entry name" value="MARR_BRCT_CHROMO"/>
    <property type="match status" value="1"/>
</dbReference>
<dbReference type="PROSITE" id="PS51293">
    <property type="entry name" value="SANT"/>
    <property type="match status" value="1"/>
</dbReference>
<dbReference type="PROSITE" id="PS50934">
    <property type="entry name" value="SWIRM"/>
    <property type="match status" value="1"/>
</dbReference>